<accession>Q1E8Z0</accession>
<accession>J3KIA5</accession>
<keyword id="KW-0029">Amino-acid transport</keyword>
<keyword id="KW-0072">Autophagy</keyword>
<keyword id="KW-0325">Glycoprotein</keyword>
<keyword id="KW-0472">Membrane</keyword>
<keyword id="KW-1185">Reference proteome</keyword>
<keyword id="KW-0812">Transmembrane</keyword>
<keyword id="KW-1133">Transmembrane helix</keyword>
<keyword id="KW-0813">Transport</keyword>
<keyword id="KW-0926">Vacuole</keyword>
<gene>
    <name type="primary">ATG22</name>
    <name type="ORF">CIMG_00973</name>
</gene>
<reference key="1">
    <citation type="journal article" date="2009" name="Genome Res.">
        <title>Comparative genomic analyses of the human fungal pathogens Coccidioides and their relatives.</title>
        <authorList>
            <person name="Sharpton T.J."/>
            <person name="Stajich J.E."/>
            <person name="Rounsley S.D."/>
            <person name="Gardner M.J."/>
            <person name="Wortman J.R."/>
            <person name="Jordar V.S."/>
            <person name="Maiti R."/>
            <person name="Kodira C.D."/>
            <person name="Neafsey D.E."/>
            <person name="Zeng Q."/>
            <person name="Hung C.-Y."/>
            <person name="McMahan C."/>
            <person name="Muszewska A."/>
            <person name="Grynberg M."/>
            <person name="Mandel M.A."/>
            <person name="Kellner E.M."/>
            <person name="Barker B.M."/>
            <person name="Galgiani J.N."/>
            <person name="Orbach M.J."/>
            <person name="Kirkland T.N."/>
            <person name="Cole G.T."/>
            <person name="Henn M.R."/>
            <person name="Birren B.W."/>
            <person name="Taylor J.W."/>
        </authorList>
    </citation>
    <scope>NUCLEOTIDE SEQUENCE [LARGE SCALE GENOMIC DNA]</scope>
    <source>
        <strain>RS</strain>
    </source>
</reference>
<reference key="2">
    <citation type="journal article" date="2010" name="Genome Res.">
        <title>Population genomic sequencing of Coccidioides fungi reveals recent hybridization and transposon control.</title>
        <authorList>
            <person name="Neafsey D.E."/>
            <person name="Barker B.M."/>
            <person name="Sharpton T.J."/>
            <person name="Stajich J.E."/>
            <person name="Park D.J."/>
            <person name="Whiston E."/>
            <person name="Hung C.-Y."/>
            <person name="McMahan C."/>
            <person name="White J."/>
            <person name="Sykes S."/>
            <person name="Heiman D."/>
            <person name="Young S."/>
            <person name="Zeng Q."/>
            <person name="Abouelleil A."/>
            <person name="Aftuck L."/>
            <person name="Bessette D."/>
            <person name="Brown A."/>
            <person name="FitzGerald M."/>
            <person name="Lui A."/>
            <person name="Macdonald J.P."/>
            <person name="Priest M."/>
            <person name="Orbach M.J."/>
            <person name="Galgiani J.N."/>
            <person name="Kirkland T.N."/>
            <person name="Cole G.T."/>
            <person name="Birren B.W."/>
            <person name="Henn M.R."/>
            <person name="Taylor J.W."/>
            <person name="Rounsley S.D."/>
        </authorList>
    </citation>
    <scope>GENOME REANNOTATION</scope>
    <source>
        <strain>RS</strain>
    </source>
</reference>
<sequence length="603" mass="65446">MTSSPPSTWRNLDENEALLRHPILNKYPGEDTRPTSKKELAGWYSYGWAAEVFAVCAMGSFLPITLEQMTRDQGVLLSDKKTPCSASWPTAPTAYAAADATASPRVGPPQCVIYVLGIEINTASFAMYTFSISVLIQSVLIISMSAAADHGVYRKKFLLAFALMGALSMILFLFLLPRFYLLAAVLAIIANTGFGASFVLLNSFLPVLVRNDPSIQATRYAAASDEQTYYTQNPSGSNTISPVDEPERLDVSSNDSALVSAELRLSTKLSSNGIGIGYIAAVLVQIGCILLVVATHSTTFSLRLVLFIIGLWWLVFTIPAALWLRPRPGPPVPDSAYGKGRWAWVSYIVFAWVSLGRTIVRARQLKDVLLFLAAWFLLSDGIATVSGTAVLFAKTQLGMNIAALGLINVIAMISGVLGAFSWSYISHHFNLRPSRTIVACICLFEVIPLYGLLGFLPFIKRLGVIGLQQPWEMYVLGAIYGLVLGGLSSYCRSFFGELIPPGFEASFYALYAITDKGSSMFGPAIVGAITDRYGEIRPAFGFLALLILLPLPLMLLVDVDRGKRDAKELAEALEGVKDMGTNGTGYATVATHEVEVGYEGDRE</sequence>
<protein>
    <recommendedName>
        <fullName>Autophagy-related protein 22</fullName>
    </recommendedName>
</protein>
<comment type="function">
    <text evidence="1">Vacuolar effluxer which mediate the efflux of amino acids resulting from autophagic degradation. The release of autophagic amino acids allows the maintenance of protein synthesis and viability during nitrogen starvation (By similarity).</text>
</comment>
<comment type="subcellular location">
    <subcellularLocation>
        <location evidence="1">Vacuole membrane</location>
        <topology evidence="1">Multi-pass membrane protein</topology>
    </subcellularLocation>
    <text evidence="1">Vacuole and punctate structures.</text>
</comment>
<comment type="similarity">
    <text evidence="3">Belongs to the ATG22 family.</text>
</comment>
<name>ATG22_COCIM</name>
<proteinExistence type="inferred from homology"/>
<dbReference type="EMBL" id="GG704911">
    <property type="protein sequence ID" value="EAS35619.3"/>
    <property type="molecule type" value="Genomic_DNA"/>
</dbReference>
<dbReference type="RefSeq" id="XP_001247202.2">
    <property type="nucleotide sequence ID" value="XM_001247201.2"/>
</dbReference>
<dbReference type="FunCoup" id="Q1E8Z0">
    <property type="interactions" value="25"/>
</dbReference>
<dbReference type="STRING" id="246410.Q1E8Z0"/>
<dbReference type="GlyCosmos" id="Q1E8Z0">
    <property type="glycosylation" value="2 sites, No reported glycans"/>
</dbReference>
<dbReference type="GeneID" id="4566561"/>
<dbReference type="KEGG" id="cim:CIMG_00973"/>
<dbReference type="VEuPathDB" id="FungiDB:CIMG_00973"/>
<dbReference type="InParanoid" id="Q1E8Z0"/>
<dbReference type="OMA" id="QQQWEMY"/>
<dbReference type="OrthoDB" id="192733at2759"/>
<dbReference type="Proteomes" id="UP000001261">
    <property type="component" value="Unassembled WGS sequence"/>
</dbReference>
<dbReference type="GO" id="GO:0005774">
    <property type="term" value="C:vacuolar membrane"/>
    <property type="evidence" value="ECO:0007669"/>
    <property type="project" value="UniProtKB-SubCell"/>
</dbReference>
<dbReference type="GO" id="GO:0032974">
    <property type="term" value="P:amino acid transmembrane export from vacuole"/>
    <property type="evidence" value="ECO:0007669"/>
    <property type="project" value="InterPro"/>
</dbReference>
<dbReference type="GO" id="GO:0006914">
    <property type="term" value="P:autophagy"/>
    <property type="evidence" value="ECO:0007669"/>
    <property type="project" value="UniProtKB-KW"/>
</dbReference>
<dbReference type="CDD" id="cd17483">
    <property type="entry name" value="MFS_Atg22_like"/>
    <property type="match status" value="1"/>
</dbReference>
<dbReference type="Gene3D" id="1.20.1250.20">
    <property type="entry name" value="MFS general substrate transporter like domains"/>
    <property type="match status" value="1"/>
</dbReference>
<dbReference type="InterPro" id="IPR044738">
    <property type="entry name" value="Atg22"/>
</dbReference>
<dbReference type="InterPro" id="IPR024671">
    <property type="entry name" value="Atg22-like"/>
</dbReference>
<dbReference type="InterPro" id="IPR050495">
    <property type="entry name" value="ATG22/LtaA_families"/>
</dbReference>
<dbReference type="InterPro" id="IPR036259">
    <property type="entry name" value="MFS_trans_sf"/>
</dbReference>
<dbReference type="PANTHER" id="PTHR23519">
    <property type="entry name" value="AUTOPHAGY-RELATED PROTEIN 22"/>
    <property type="match status" value="1"/>
</dbReference>
<dbReference type="PANTHER" id="PTHR23519:SF1">
    <property type="entry name" value="AUTOPHAGY-RELATED PROTEIN 22"/>
    <property type="match status" value="1"/>
</dbReference>
<dbReference type="Pfam" id="PF11700">
    <property type="entry name" value="ATG22"/>
    <property type="match status" value="1"/>
</dbReference>
<dbReference type="SUPFAM" id="SSF103473">
    <property type="entry name" value="MFS general substrate transporter"/>
    <property type="match status" value="1"/>
</dbReference>
<organism>
    <name type="scientific">Coccidioides immitis (strain RS)</name>
    <name type="common">Valley fever fungus</name>
    <dbReference type="NCBI Taxonomy" id="246410"/>
    <lineage>
        <taxon>Eukaryota</taxon>
        <taxon>Fungi</taxon>
        <taxon>Dikarya</taxon>
        <taxon>Ascomycota</taxon>
        <taxon>Pezizomycotina</taxon>
        <taxon>Eurotiomycetes</taxon>
        <taxon>Eurotiomycetidae</taxon>
        <taxon>Onygenales</taxon>
        <taxon>Onygenaceae</taxon>
        <taxon>Coccidioides</taxon>
    </lineage>
</organism>
<feature type="chain" id="PRO_0000318025" description="Autophagy-related protein 22">
    <location>
        <begin position="1"/>
        <end position="603"/>
    </location>
</feature>
<feature type="transmembrane region" description="Helical" evidence="2">
    <location>
        <begin position="46"/>
        <end position="66"/>
    </location>
</feature>
<feature type="transmembrane region" description="Helical" evidence="2">
    <location>
        <begin position="122"/>
        <end position="142"/>
    </location>
</feature>
<feature type="transmembrane region" description="Helical" evidence="2">
    <location>
        <begin position="157"/>
        <end position="177"/>
    </location>
</feature>
<feature type="transmembrane region" description="Helical" evidence="2">
    <location>
        <begin position="181"/>
        <end position="201"/>
    </location>
</feature>
<feature type="transmembrane region" description="Helical" evidence="2">
    <location>
        <begin position="274"/>
        <end position="294"/>
    </location>
</feature>
<feature type="transmembrane region" description="Helical" evidence="2">
    <location>
        <begin position="304"/>
        <end position="324"/>
    </location>
</feature>
<feature type="transmembrane region" description="Helical" evidence="2">
    <location>
        <begin position="342"/>
        <end position="362"/>
    </location>
</feature>
<feature type="transmembrane region" description="Helical" evidence="2">
    <location>
        <begin position="368"/>
        <end position="388"/>
    </location>
</feature>
<feature type="transmembrane region" description="Helical" evidence="2">
    <location>
        <begin position="401"/>
        <end position="421"/>
    </location>
</feature>
<feature type="transmembrane region" description="Helical" evidence="2">
    <location>
        <begin position="439"/>
        <end position="459"/>
    </location>
</feature>
<feature type="transmembrane region" description="Helical" evidence="2">
    <location>
        <begin position="464"/>
        <end position="484"/>
    </location>
</feature>
<feature type="transmembrane region" description="Helical" evidence="2">
    <location>
        <begin position="539"/>
        <end position="559"/>
    </location>
</feature>
<feature type="glycosylation site" description="N-linked (GlcNAc...) asparagine" evidence="2">
    <location>
        <position position="254"/>
    </location>
</feature>
<feature type="glycosylation site" description="N-linked (GlcNAc...) asparagine" evidence="2">
    <location>
        <position position="582"/>
    </location>
</feature>
<evidence type="ECO:0000250" key="1"/>
<evidence type="ECO:0000255" key="2"/>
<evidence type="ECO:0000305" key="3"/>